<dbReference type="EC" id="4.3.2.10" evidence="1"/>
<dbReference type="EMBL" id="CP000097">
    <property type="protein sequence ID" value="ABB26529.1"/>
    <property type="molecule type" value="Genomic_DNA"/>
</dbReference>
<dbReference type="RefSeq" id="WP_011360347.1">
    <property type="nucleotide sequence ID" value="NC_007513.1"/>
</dbReference>
<dbReference type="SMR" id="Q3AWY4"/>
<dbReference type="STRING" id="316279.Syncc9902_1571"/>
<dbReference type="KEGG" id="sye:Syncc9902_1571"/>
<dbReference type="eggNOG" id="COG0107">
    <property type="taxonomic scope" value="Bacteria"/>
</dbReference>
<dbReference type="HOGENOM" id="CLU_048577_4_0_3"/>
<dbReference type="OrthoDB" id="9781903at2"/>
<dbReference type="UniPathway" id="UPA00031">
    <property type="reaction ID" value="UER00010"/>
</dbReference>
<dbReference type="Proteomes" id="UP000002712">
    <property type="component" value="Chromosome"/>
</dbReference>
<dbReference type="GO" id="GO:0005737">
    <property type="term" value="C:cytoplasm"/>
    <property type="evidence" value="ECO:0007669"/>
    <property type="project" value="UniProtKB-SubCell"/>
</dbReference>
<dbReference type="GO" id="GO:0000107">
    <property type="term" value="F:imidazoleglycerol-phosphate synthase activity"/>
    <property type="evidence" value="ECO:0007669"/>
    <property type="project" value="UniProtKB-UniRule"/>
</dbReference>
<dbReference type="GO" id="GO:0016829">
    <property type="term" value="F:lyase activity"/>
    <property type="evidence" value="ECO:0007669"/>
    <property type="project" value="UniProtKB-KW"/>
</dbReference>
<dbReference type="GO" id="GO:0000105">
    <property type="term" value="P:L-histidine biosynthetic process"/>
    <property type="evidence" value="ECO:0007669"/>
    <property type="project" value="UniProtKB-UniRule"/>
</dbReference>
<dbReference type="CDD" id="cd04731">
    <property type="entry name" value="HisF"/>
    <property type="match status" value="1"/>
</dbReference>
<dbReference type="FunFam" id="3.20.20.70:FF:000006">
    <property type="entry name" value="Imidazole glycerol phosphate synthase subunit HisF"/>
    <property type="match status" value="1"/>
</dbReference>
<dbReference type="Gene3D" id="3.20.20.70">
    <property type="entry name" value="Aldolase class I"/>
    <property type="match status" value="1"/>
</dbReference>
<dbReference type="HAMAP" id="MF_01013">
    <property type="entry name" value="HisF"/>
    <property type="match status" value="1"/>
</dbReference>
<dbReference type="InterPro" id="IPR013785">
    <property type="entry name" value="Aldolase_TIM"/>
</dbReference>
<dbReference type="InterPro" id="IPR006062">
    <property type="entry name" value="His_biosynth"/>
</dbReference>
<dbReference type="InterPro" id="IPR004651">
    <property type="entry name" value="HisF"/>
</dbReference>
<dbReference type="InterPro" id="IPR050064">
    <property type="entry name" value="IGPS_HisA/HisF"/>
</dbReference>
<dbReference type="InterPro" id="IPR011060">
    <property type="entry name" value="RibuloseP-bd_barrel"/>
</dbReference>
<dbReference type="NCBIfam" id="TIGR00735">
    <property type="entry name" value="hisF"/>
    <property type="match status" value="1"/>
</dbReference>
<dbReference type="PANTHER" id="PTHR21235:SF2">
    <property type="entry name" value="IMIDAZOLE GLYCEROL PHOSPHATE SYNTHASE HISHF"/>
    <property type="match status" value="1"/>
</dbReference>
<dbReference type="PANTHER" id="PTHR21235">
    <property type="entry name" value="IMIDAZOLE GLYCEROL PHOSPHATE SYNTHASE SUBUNIT HISF/H IGP SYNTHASE SUBUNIT HISF/H"/>
    <property type="match status" value="1"/>
</dbReference>
<dbReference type="Pfam" id="PF00977">
    <property type="entry name" value="His_biosynth"/>
    <property type="match status" value="1"/>
</dbReference>
<dbReference type="SUPFAM" id="SSF51366">
    <property type="entry name" value="Ribulose-phoshate binding barrel"/>
    <property type="match status" value="1"/>
</dbReference>
<protein>
    <recommendedName>
        <fullName evidence="1">Imidazole glycerol phosphate synthase subunit HisF</fullName>
        <ecNumber evidence="1">4.3.2.10</ecNumber>
    </recommendedName>
    <alternativeName>
        <fullName evidence="1">IGP synthase cyclase subunit</fullName>
    </alternativeName>
    <alternativeName>
        <fullName evidence="1">IGP synthase subunit HisF</fullName>
    </alternativeName>
    <alternativeName>
        <fullName evidence="1">ImGP synthase subunit HisF</fullName>
        <shortName evidence="1">IGPS subunit HisF</shortName>
    </alternativeName>
</protein>
<keyword id="KW-0028">Amino-acid biosynthesis</keyword>
<keyword id="KW-0963">Cytoplasm</keyword>
<keyword id="KW-0368">Histidine biosynthesis</keyword>
<keyword id="KW-0456">Lyase</keyword>
<keyword id="KW-1185">Reference proteome</keyword>
<feature type="chain" id="PRO_1000063165" description="Imidazole glycerol phosphate synthase subunit HisF">
    <location>
        <begin position="1"/>
        <end position="258"/>
    </location>
</feature>
<feature type="active site" evidence="1">
    <location>
        <position position="11"/>
    </location>
</feature>
<feature type="active site" evidence="1">
    <location>
        <position position="130"/>
    </location>
</feature>
<comment type="function">
    <text evidence="1">IGPS catalyzes the conversion of PRFAR and glutamine to IGP, AICAR and glutamate. The HisF subunit catalyzes the cyclization activity that produces IGP and AICAR from PRFAR using the ammonia provided by the HisH subunit.</text>
</comment>
<comment type="catalytic activity">
    <reaction evidence="1">
        <text>5-[(5-phospho-1-deoxy-D-ribulos-1-ylimino)methylamino]-1-(5-phospho-beta-D-ribosyl)imidazole-4-carboxamide + L-glutamine = D-erythro-1-(imidazol-4-yl)glycerol 3-phosphate + 5-amino-1-(5-phospho-beta-D-ribosyl)imidazole-4-carboxamide + L-glutamate + H(+)</text>
        <dbReference type="Rhea" id="RHEA:24793"/>
        <dbReference type="ChEBI" id="CHEBI:15378"/>
        <dbReference type="ChEBI" id="CHEBI:29985"/>
        <dbReference type="ChEBI" id="CHEBI:58278"/>
        <dbReference type="ChEBI" id="CHEBI:58359"/>
        <dbReference type="ChEBI" id="CHEBI:58475"/>
        <dbReference type="ChEBI" id="CHEBI:58525"/>
        <dbReference type="EC" id="4.3.2.10"/>
    </reaction>
</comment>
<comment type="pathway">
    <text evidence="1">Amino-acid biosynthesis; L-histidine biosynthesis; L-histidine from 5-phospho-alpha-D-ribose 1-diphosphate: step 5/9.</text>
</comment>
<comment type="subunit">
    <text evidence="1">Heterodimer of HisH and HisF.</text>
</comment>
<comment type="subcellular location">
    <subcellularLocation>
        <location evidence="1">Cytoplasm</location>
    </subcellularLocation>
</comment>
<comment type="similarity">
    <text evidence="1">Belongs to the HisA/HisF family.</text>
</comment>
<accession>Q3AWY4</accession>
<evidence type="ECO:0000255" key="1">
    <source>
        <dbReference type="HAMAP-Rule" id="MF_01013"/>
    </source>
</evidence>
<sequence>MVALRLIPCLDVARGRVVKGINFVGLRDAGDPVELACRYSHAGADELVFLDIAASHEGRATLVDLVRRTAESVTIPFTVGGGISSVEGITELLRAGADKVSLNSSAVGRPELVREGAQRFGRQCIVVAIDARRRNSGTDGWDVYVKGGRENTGLDVVRWAQQVTELGAGEILLTSMDGDGTQAGYDLQLTRAVAAAVSVPVIASGGAGCLDHIAAALETGPEGGHASAALLASLLHDGVLTVEQIKADLLARGLKIRP</sequence>
<organism>
    <name type="scientific">Synechococcus sp. (strain CC9902)</name>
    <dbReference type="NCBI Taxonomy" id="316279"/>
    <lineage>
        <taxon>Bacteria</taxon>
        <taxon>Bacillati</taxon>
        <taxon>Cyanobacteriota</taxon>
        <taxon>Cyanophyceae</taxon>
        <taxon>Synechococcales</taxon>
        <taxon>Synechococcaceae</taxon>
        <taxon>Synechococcus</taxon>
    </lineage>
</organism>
<name>HIS6_SYNS9</name>
<proteinExistence type="inferred from homology"/>
<reference key="1">
    <citation type="submission" date="2005-08" db="EMBL/GenBank/DDBJ databases">
        <title>Complete sequence of Synechococcus sp. CC9902.</title>
        <authorList>
            <person name="Copeland A."/>
            <person name="Lucas S."/>
            <person name="Lapidus A."/>
            <person name="Barry K."/>
            <person name="Detter J.C."/>
            <person name="Glavina T."/>
            <person name="Hammon N."/>
            <person name="Israni S."/>
            <person name="Pitluck S."/>
            <person name="Martinez M."/>
            <person name="Schmutz J."/>
            <person name="Larimer F."/>
            <person name="Land M."/>
            <person name="Kyrpides N."/>
            <person name="Ivanova N."/>
            <person name="Richardson P."/>
        </authorList>
    </citation>
    <scope>NUCLEOTIDE SEQUENCE [LARGE SCALE GENOMIC DNA]</scope>
    <source>
        <strain>CC9902</strain>
    </source>
</reference>
<gene>
    <name evidence="1" type="primary">hisF</name>
    <name type="ordered locus">Syncc9902_1571</name>
</gene>